<feature type="chain" id="PRO_0000323217" description="Small ribosomal subunit protein uS5">
    <location>
        <begin position="1"/>
        <end position="152"/>
    </location>
</feature>
<feature type="domain" description="S5 DRBM" evidence="1">
    <location>
        <begin position="14"/>
        <end position="77"/>
    </location>
</feature>
<comment type="function">
    <text evidence="1">With S4 and S12 plays an important role in translational accuracy.</text>
</comment>
<comment type="function">
    <text evidence="1">Located at the back of the 30S subunit body where it stabilizes the conformation of the head with respect to the body.</text>
</comment>
<comment type="subunit">
    <text evidence="1">Part of the 30S ribosomal subunit. Contacts proteins S4 and S8.</text>
</comment>
<comment type="domain">
    <text>The N-terminal domain interacts with the head of the 30S subunit; the C-terminal domain interacts with the body and contacts protein S4. The interaction surface between S4 and S5 is involved in control of translational fidelity.</text>
</comment>
<comment type="similarity">
    <text evidence="1">Belongs to the universal ribosomal protein uS5 family.</text>
</comment>
<reference key="1">
    <citation type="journal article" date="2007" name="Proc. Natl. Acad. Sci. U.S.A.">
        <title>Deep-sea vent epsilon-proteobacterial genomes provide insights into emergence of pathogens.</title>
        <authorList>
            <person name="Nakagawa S."/>
            <person name="Takaki Y."/>
            <person name="Shimamura S."/>
            <person name="Reysenbach A.-L."/>
            <person name="Takai K."/>
            <person name="Horikoshi K."/>
        </authorList>
    </citation>
    <scope>NUCLEOTIDE SEQUENCE [LARGE SCALE GENOMIC DNA]</scope>
    <source>
        <strain>NBC37-1</strain>
    </source>
</reference>
<sequence length="152" mass="16432">MQKNNHNEEIEKEFEEVIVNIGRVTKVVKGGRRFRFTALVVIGDRKGTVGYGFGKAKEVPDAIKKAVDDAHKNLVKVNIKGTTIAHDIEHKFNASRIVLRPASEGTGVIAGGAARPVLELAGIQDVLSKSIGSNNPNNLVRATIQALTRIKA</sequence>
<proteinExistence type="inferred from homology"/>
<keyword id="KW-0687">Ribonucleoprotein</keyword>
<keyword id="KW-0689">Ribosomal protein</keyword>
<keyword id="KW-0694">RNA-binding</keyword>
<keyword id="KW-0699">rRNA-binding</keyword>
<organism>
    <name type="scientific">Sulfurovum sp. (strain NBC37-1)</name>
    <dbReference type="NCBI Taxonomy" id="387093"/>
    <lineage>
        <taxon>Bacteria</taxon>
        <taxon>Pseudomonadati</taxon>
        <taxon>Campylobacterota</taxon>
        <taxon>Epsilonproteobacteria</taxon>
        <taxon>Campylobacterales</taxon>
        <taxon>Sulfurovaceae</taxon>
        <taxon>Sulfurovum</taxon>
    </lineage>
</organism>
<dbReference type="EMBL" id="AP009179">
    <property type="protein sequence ID" value="BAF73274.1"/>
    <property type="molecule type" value="Genomic_DNA"/>
</dbReference>
<dbReference type="RefSeq" id="WP_012084115.1">
    <property type="nucleotide sequence ID" value="NC_009663.1"/>
</dbReference>
<dbReference type="SMR" id="A6QCR5"/>
<dbReference type="STRING" id="387093.SUN_2338"/>
<dbReference type="KEGG" id="sun:SUN_2338"/>
<dbReference type="eggNOG" id="COG0098">
    <property type="taxonomic scope" value="Bacteria"/>
</dbReference>
<dbReference type="HOGENOM" id="CLU_065898_2_2_7"/>
<dbReference type="Proteomes" id="UP000006378">
    <property type="component" value="Chromosome"/>
</dbReference>
<dbReference type="GO" id="GO:0015935">
    <property type="term" value="C:small ribosomal subunit"/>
    <property type="evidence" value="ECO:0007669"/>
    <property type="project" value="InterPro"/>
</dbReference>
<dbReference type="GO" id="GO:0019843">
    <property type="term" value="F:rRNA binding"/>
    <property type="evidence" value="ECO:0007669"/>
    <property type="project" value="UniProtKB-UniRule"/>
</dbReference>
<dbReference type="GO" id="GO:0003735">
    <property type="term" value="F:structural constituent of ribosome"/>
    <property type="evidence" value="ECO:0007669"/>
    <property type="project" value="InterPro"/>
</dbReference>
<dbReference type="GO" id="GO:0006412">
    <property type="term" value="P:translation"/>
    <property type="evidence" value="ECO:0007669"/>
    <property type="project" value="UniProtKB-UniRule"/>
</dbReference>
<dbReference type="FunFam" id="3.30.160.20:FF:000001">
    <property type="entry name" value="30S ribosomal protein S5"/>
    <property type="match status" value="1"/>
</dbReference>
<dbReference type="FunFam" id="3.30.230.10:FF:000002">
    <property type="entry name" value="30S ribosomal protein S5"/>
    <property type="match status" value="1"/>
</dbReference>
<dbReference type="Gene3D" id="3.30.160.20">
    <property type="match status" value="1"/>
</dbReference>
<dbReference type="Gene3D" id="3.30.230.10">
    <property type="match status" value="1"/>
</dbReference>
<dbReference type="HAMAP" id="MF_01307_B">
    <property type="entry name" value="Ribosomal_uS5_B"/>
    <property type="match status" value="1"/>
</dbReference>
<dbReference type="InterPro" id="IPR020568">
    <property type="entry name" value="Ribosomal_Su5_D2-typ_SF"/>
</dbReference>
<dbReference type="InterPro" id="IPR000851">
    <property type="entry name" value="Ribosomal_uS5"/>
</dbReference>
<dbReference type="InterPro" id="IPR005712">
    <property type="entry name" value="Ribosomal_uS5_bac-type"/>
</dbReference>
<dbReference type="InterPro" id="IPR005324">
    <property type="entry name" value="Ribosomal_uS5_C"/>
</dbReference>
<dbReference type="InterPro" id="IPR013810">
    <property type="entry name" value="Ribosomal_uS5_N"/>
</dbReference>
<dbReference type="InterPro" id="IPR018192">
    <property type="entry name" value="Ribosomal_uS5_N_CS"/>
</dbReference>
<dbReference type="InterPro" id="IPR014721">
    <property type="entry name" value="Ribsml_uS5_D2-typ_fold_subgr"/>
</dbReference>
<dbReference type="NCBIfam" id="TIGR01021">
    <property type="entry name" value="rpsE_bact"/>
    <property type="match status" value="1"/>
</dbReference>
<dbReference type="PANTHER" id="PTHR48277">
    <property type="entry name" value="MITOCHONDRIAL RIBOSOMAL PROTEIN S5"/>
    <property type="match status" value="1"/>
</dbReference>
<dbReference type="PANTHER" id="PTHR48277:SF1">
    <property type="entry name" value="MITOCHONDRIAL RIBOSOMAL PROTEIN S5"/>
    <property type="match status" value="1"/>
</dbReference>
<dbReference type="Pfam" id="PF00333">
    <property type="entry name" value="Ribosomal_S5"/>
    <property type="match status" value="1"/>
</dbReference>
<dbReference type="Pfam" id="PF03719">
    <property type="entry name" value="Ribosomal_S5_C"/>
    <property type="match status" value="1"/>
</dbReference>
<dbReference type="SUPFAM" id="SSF54768">
    <property type="entry name" value="dsRNA-binding domain-like"/>
    <property type="match status" value="1"/>
</dbReference>
<dbReference type="SUPFAM" id="SSF54211">
    <property type="entry name" value="Ribosomal protein S5 domain 2-like"/>
    <property type="match status" value="1"/>
</dbReference>
<dbReference type="PROSITE" id="PS00585">
    <property type="entry name" value="RIBOSOMAL_S5"/>
    <property type="match status" value="1"/>
</dbReference>
<dbReference type="PROSITE" id="PS50881">
    <property type="entry name" value="S5_DSRBD"/>
    <property type="match status" value="1"/>
</dbReference>
<protein>
    <recommendedName>
        <fullName evidence="1">Small ribosomal subunit protein uS5</fullName>
    </recommendedName>
    <alternativeName>
        <fullName evidence="2">30S ribosomal protein S5</fullName>
    </alternativeName>
</protein>
<gene>
    <name evidence="1" type="primary">rpsE</name>
    <name type="ordered locus">SUN_2338</name>
</gene>
<evidence type="ECO:0000255" key="1">
    <source>
        <dbReference type="HAMAP-Rule" id="MF_01307"/>
    </source>
</evidence>
<evidence type="ECO:0000305" key="2"/>
<accession>A6QCR5</accession>
<name>RS5_SULNB</name>